<dbReference type="EC" id="7.1.2.2" evidence="2"/>
<dbReference type="EMBL" id="X02499">
    <property type="protein sequence ID" value="CAA26338.1"/>
    <property type="molecule type" value="Genomic_DNA"/>
</dbReference>
<dbReference type="PIR" id="S08581">
    <property type="entry name" value="PWQFA"/>
</dbReference>
<dbReference type="RefSeq" id="WP_011388979.1">
    <property type="nucleotide sequence ID" value="NZ_DAMDTZ010000168.1"/>
</dbReference>
<dbReference type="SMR" id="P05036"/>
<dbReference type="OMA" id="INQRDNW"/>
<dbReference type="GO" id="GO:0005886">
    <property type="term" value="C:plasma membrane"/>
    <property type="evidence" value="ECO:0007669"/>
    <property type="project" value="UniProtKB-SubCell"/>
</dbReference>
<dbReference type="GO" id="GO:0045259">
    <property type="term" value="C:proton-transporting ATP synthase complex"/>
    <property type="evidence" value="ECO:0000314"/>
    <property type="project" value="CACAO"/>
</dbReference>
<dbReference type="GO" id="GO:0043531">
    <property type="term" value="F:ADP binding"/>
    <property type="evidence" value="ECO:0007669"/>
    <property type="project" value="TreeGrafter"/>
</dbReference>
<dbReference type="GO" id="GO:0005524">
    <property type="term" value="F:ATP binding"/>
    <property type="evidence" value="ECO:0007669"/>
    <property type="project" value="UniProtKB-UniRule"/>
</dbReference>
<dbReference type="GO" id="GO:0046933">
    <property type="term" value="F:proton-transporting ATP synthase activity, rotational mechanism"/>
    <property type="evidence" value="ECO:0007669"/>
    <property type="project" value="UniProtKB-UniRule"/>
</dbReference>
<dbReference type="GO" id="GO:0006754">
    <property type="term" value="P:ATP biosynthetic process"/>
    <property type="evidence" value="ECO:0000314"/>
    <property type="project" value="CACAO"/>
</dbReference>
<dbReference type="CDD" id="cd18113">
    <property type="entry name" value="ATP-synt_F1_alpha_C"/>
    <property type="match status" value="1"/>
</dbReference>
<dbReference type="CDD" id="cd18116">
    <property type="entry name" value="ATP-synt_F1_alpha_N"/>
    <property type="match status" value="1"/>
</dbReference>
<dbReference type="CDD" id="cd01132">
    <property type="entry name" value="F1-ATPase_alpha_CD"/>
    <property type="match status" value="1"/>
</dbReference>
<dbReference type="FunFam" id="1.20.150.20:FF:000001">
    <property type="entry name" value="ATP synthase subunit alpha"/>
    <property type="match status" value="1"/>
</dbReference>
<dbReference type="FunFam" id="2.40.30.20:FF:000001">
    <property type="entry name" value="ATP synthase subunit alpha"/>
    <property type="match status" value="1"/>
</dbReference>
<dbReference type="FunFam" id="3.40.50.300:FF:002432">
    <property type="entry name" value="ATP synthase subunit alpha, mitochondrial"/>
    <property type="match status" value="1"/>
</dbReference>
<dbReference type="Gene3D" id="2.40.30.20">
    <property type="match status" value="1"/>
</dbReference>
<dbReference type="Gene3D" id="1.20.150.20">
    <property type="entry name" value="ATP synthase alpha/beta chain, C-terminal domain"/>
    <property type="match status" value="1"/>
</dbReference>
<dbReference type="Gene3D" id="3.40.50.300">
    <property type="entry name" value="P-loop containing nucleotide triphosphate hydrolases"/>
    <property type="match status" value="1"/>
</dbReference>
<dbReference type="HAMAP" id="MF_01346">
    <property type="entry name" value="ATP_synth_alpha_bact"/>
    <property type="match status" value="1"/>
</dbReference>
<dbReference type="InterPro" id="IPR023366">
    <property type="entry name" value="ATP_synth_asu-like_sf"/>
</dbReference>
<dbReference type="InterPro" id="IPR000793">
    <property type="entry name" value="ATP_synth_asu_C"/>
</dbReference>
<dbReference type="InterPro" id="IPR038376">
    <property type="entry name" value="ATP_synth_asu_C_sf"/>
</dbReference>
<dbReference type="InterPro" id="IPR033732">
    <property type="entry name" value="ATP_synth_F1_a_nt-bd_dom"/>
</dbReference>
<dbReference type="InterPro" id="IPR005294">
    <property type="entry name" value="ATP_synth_F1_asu"/>
</dbReference>
<dbReference type="InterPro" id="IPR020003">
    <property type="entry name" value="ATPase_a/bsu_AS"/>
</dbReference>
<dbReference type="InterPro" id="IPR004100">
    <property type="entry name" value="ATPase_F1/V1/A1_a/bsu_N"/>
</dbReference>
<dbReference type="InterPro" id="IPR036121">
    <property type="entry name" value="ATPase_F1/V1/A1_a/bsu_N_sf"/>
</dbReference>
<dbReference type="InterPro" id="IPR000194">
    <property type="entry name" value="ATPase_F1/V1/A1_a/bsu_nucl-bd"/>
</dbReference>
<dbReference type="InterPro" id="IPR027417">
    <property type="entry name" value="P-loop_NTPase"/>
</dbReference>
<dbReference type="NCBIfam" id="TIGR00962">
    <property type="entry name" value="atpA"/>
    <property type="match status" value="1"/>
</dbReference>
<dbReference type="NCBIfam" id="NF009884">
    <property type="entry name" value="PRK13343.1"/>
    <property type="match status" value="1"/>
</dbReference>
<dbReference type="PANTHER" id="PTHR48082">
    <property type="entry name" value="ATP SYNTHASE SUBUNIT ALPHA, MITOCHONDRIAL"/>
    <property type="match status" value="1"/>
</dbReference>
<dbReference type="PANTHER" id="PTHR48082:SF2">
    <property type="entry name" value="ATP SYNTHASE SUBUNIT ALPHA, MITOCHONDRIAL"/>
    <property type="match status" value="1"/>
</dbReference>
<dbReference type="Pfam" id="PF00006">
    <property type="entry name" value="ATP-synt_ab"/>
    <property type="match status" value="1"/>
</dbReference>
<dbReference type="Pfam" id="PF00306">
    <property type="entry name" value="ATP-synt_ab_C"/>
    <property type="match status" value="1"/>
</dbReference>
<dbReference type="Pfam" id="PF02874">
    <property type="entry name" value="ATP-synt_ab_N"/>
    <property type="match status" value="1"/>
</dbReference>
<dbReference type="PIRSF" id="PIRSF039088">
    <property type="entry name" value="F_ATPase_subunit_alpha"/>
    <property type="match status" value="1"/>
</dbReference>
<dbReference type="SUPFAM" id="SSF47917">
    <property type="entry name" value="C-terminal domain of alpha and beta subunits of F1 ATP synthase"/>
    <property type="match status" value="1"/>
</dbReference>
<dbReference type="SUPFAM" id="SSF50615">
    <property type="entry name" value="N-terminal domain of alpha and beta subunits of F1 ATP synthase"/>
    <property type="match status" value="1"/>
</dbReference>
<dbReference type="SUPFAM" id="SSF52540">
    <property type="entry name" value="P-loop containing nucleoside triphosphate hydrolases"/>
    <property type="match status" value="1"/>
</dbReference>
<dbReference type="PROSITE" id="PS00152">
    <property type="entry name" value="ATPASE_ALPHA_BETA"/>
    <property type="match status" value="1"/>
</dbReference>
<comment type="function">
    <text>Produces ATP from ADP in the presence of a proton gradient across the membrane. The alpha chain is a regulatory subunit.</text>
</comment>
<comment type="catalytic activity">
    <reaction evidence="2">
        <text>ATP + H2O + 4 H(+)(in) = ADP + phosphate + 5 H(+)(out)</text>
        <dbReference type="Rhea" id="RHEA:57720"/>
        <dbReference type="ChEBI" id="CHEBI:15377"/>
        <dbReference type="ChEBI" id="CHEBI:15378"/>
        <dbReference type="ChEBI" id="CHEBI:30616"/>
        <dbReference type="ChEBI" id="CHEBI:43474"/>
        <dbReference type="ChEBI" id="CHEBI:456216"/>
        <dbReference type="EC" id="7.1.2.2"/>
    </reaction>
</comment>
<comment type="subunit">
    <text evidence="1">F-type ATPases have 2 components, CF(1) - the catalytic core - and CF(0) - the membrane proton channel. CF(1) has five subunits: alpha(3), beta(3), gamma(1), delta(1), epsilon(1). CF(0) has four main subunits: a(1), b(1), b'(1) and c(9-12) (By similarity).</text>
</comment>
<comment type="subcellular location">
    <subcellularLocation>
        <location evidence="2">Cell inner membrane</location>
        <topology evidence="2">Peripheral membrane protein</topology>
    </subcellularLocation>
</comment>
<comment type="similarity">
    <text evidence="2">Belongs to the ATPase alpha/beta chains family.</text>
</comment>
<sequence length="510" mass="55026">MEIRAAEISAILKEQIANFGTEAESAEVGQVLSVGDGIARVYGLDNVQAGEMVEFANGVKGMALNLESDNVGIVIFGEDRGIKEGDVVKRTQTIVDVPVGKGLLGRVVDGLGNPIDGKGDLVDVERKRAEVKAPGIIPRKSVHEPVQTGIKAIDSLIPIGRGQRELIIGDRQTGKTAVILDTILNQKAVNDKAKDDSEKLFCVYVAVGQKRSTVAQVVKVLADHGALDYTIVVAATASEPAPLQFLAPYTGCTMGEFFRDNGMHAVIFYDDLTKQAVAYRQMSLLLRRPPGREAFPGDVFYLHSRLLERAAKLNDDNGAGSLTALPVIETQANDVSAYIPTNVISITDGQIFLETDLFFKGIRPAVNVGLSVSRVGSSAQIKAMKQVAGSIKLELAQYREMAAFAQFASDLDPATQKLLARGARLTELLKQAQYSPLAVEEQVCVIYAGTRGYLDKLKTTDVVRYEASLLGALRTSGADLLESIRTGKALSKEIEQKLVKFLDDFGKKFA</sequence>
<name>ATPA_RHORU</name>
<evidence type="ECO:0000250" key="1"/>
<evidence type="ECO:0000255" key="2">
    <source>
        <dbReference type="HAMAP-Rule" id="MF_01346"/>
    </source>
</evidence>
<protein>
    <recommendedName>
        <fullName evidence="2">ATP synthase subunit alpha</fullName>
        <ecNumber evidence="2">7.1.2.2</ecNumber>
    </recommendedName>
    <alternativeName>
        <fullName evidence="2">ATP synthase F1 sector subunit alpha</fullName>
    </alternativeName>
    <alternativeName>
        <fullName evidence="2">F-ATPase subunit alpha</fullName>
    </alternativeName>
</protein>
<accession>P05036</accession>
<keyword id="KW-0066">ATP synthesis</keyword>
<keyword id="KW-0067">ATP-binding</keyword>
<keyword id="KW-0997">Cell inner membrane</keyword>
<keyword id="KW-1003">Cell membrane</keyword>
<keyword id="KW-0139">CF(1)</keyword>
<keyword id="KW-0903">Direct protein sequencing</keyword>
<keyword id="KW-0375">Hydrogen ion transport</keyword>
<keyword id="KW-0406">Ion transport</keyword>
<keyword id="KW-0472">Membrane</keyword>
<keyword id="KW-0547">Nucleotide-binding</keyword>
<keyword id="KW-1278">Translocase</keyword>
<keyword id="KW-0813">Transport</keyword>
<feature type="chain" id="PRO_0000144346" description="ATP synthase subunit alpha">
    <location>
        <begin position="1"/>
        <end position="510"/>
    </location>
</feature>
<feature type="binding site" evidence="2">
    <location>
        <begin position="169"/>
        <end position="176"/>
    </location>
    <ligand>
        <name>ATP</name>
        <dbReference type="ChEBI" id="CHEBI:30616"/>
    </ligand>
</feature>
<feature type="site" description="Required for activity" evidence="2">
    <location>
        <position position="371"/>
    </location>
</feature>
<gene>
    <name evidence="2" type="primary">atpA</name>
</gene>
<organism>
    <name type="scientific">Rhodospirillum rubrum</name>
    <dbReference type="NCBI Taxonomy" id="1085"/>
    <lineage>
        <taxon>Bacteria</taxon>
        <taxon>Pseudomonadati</taxon>
        <taxon>Pseudomonadota</taxon>
        <taxon>Alphaproteobacteria</taxon>
        <taxon>Rhodospirillales</taxon>
        <taxon>Rhodospirillaceae</taxon>
        <taxon>Rhodospirillum</taxon>
    </lineage>
</organism>
<reference key="1">
    <citation type="journal article" date="1985" name="Biochem. J.">
        <title>Nucleotide sequence of the Rhodospirillum rubrum atp operon.</title>
        <authorList>
            <person name="Falk G."/>
            <person name="Hampe A."/>
            <person name="Walker J.E."/>
        </authorList>
    </citation>
    <scope>NUCLEOTIDE SEQUENCE [GENOMIC DNA]</scope>
</reference>
<reference key="2">
    <citation type="journal article" date="1992" name="FEBS Lett.">
        <title>Isolation and characterisation of a functional alpha beta heterodimer from the ATP synthase of Rhodospirillum rubrum.</title>
        <authorList>
            <person name="Andralojc P.J."/>
            <person name="Harris D.A."/>
        </authorList>
    </citation>
    <scope>PROTEIN SEQUENCE OF 1-15</scope>
</reference>
<proteinExistence type="evidence at protein level"/>